<dbReference type="EC" id="1.1.1.103" evidence="1"/>
<dbReference type="EMBL" id="AL939129">
    <property type="protein sequence ID" value="CAB71246.1"/>
    <property type="molecule type" value="Genomic_DNA"/>
</dbReference>
<dbReference type="RefSeq" id="NP_630871.1">
    <property type="nucleotide sequence ID" value="NC_003888.3"/>
</dbReference>
<dbReference type="RefSeq" id="WP_011031190.1">
    <property type="nucleotide sequence ID" value="NZ_VNID01000002.1"/>
</dbReference>
<dbReference type="SMR" id="Q9L233"/>
<dbReference type="STRING" id="100226.gene:17764457"/>
<dbReference type="PaxDb" id="100226-SCO6799"/>
<dbReference type="KEGG" id="sco:SCO6799"/>
<dbReference type="PATRIC" id="fig|100226.15.peg.6909"/>
<dbReference type="eggNOG" id="COG1063">
    <property type="taxonomic scope" value="Bacteria"/>
</dbReference>
<dbReference type="HOGENOM" id="CLU_026673_11_0_11"/>
<dbReference type="InParanoid" id="Q9L233"/>
<dbReference type="OrthoDB" id="241504at2"/>
<dbReference type="PhylomeDB" id="Q9L233"/>
<dbReference type="UniPathway" id="UPA00046">
    <property type="reaction ID" value="UER00505"/>
</dbReference>
<dbReference type="Proteomes" id="UP000001973">
    <property type="component" value="Chromosome"/>
</dbReference>
<dbReference type="GO" id="GO:0005737">
    <property type="term" value="C:cytoplasm"/>
    <property type="evidence" value="ECO:0007669"/>
    <property type="project" value="UniProtKB-SubCell"/>
</dbReference>
<dbReference type="GO" id="GO:0008743">
    <property type="term" value="F:L-threonine 3-dehydrogenase activity"/>
    <property type="evidence" value="ECO:0007669"/>
    <property type="project" value="UniProtKB-UniRule"/>
</dbReference>
<dbReference type="GO" id="GO:0008270">
    <property type="term" value="F:zinc ion binding"/>
    <property type="evidence" value="ECO:0007669"/>
    <property type="project" value="UniProtKB-UniRule"/>
</dbReference>
<dbReference type="GO" id="GO:0019518">
    <property type="term" value="P:L-threonine catabolic process to glycine"/>
    <property type="evidence" value="ECO:0007669"/>
    <property type="project" value="UniProtKB-UniPathway"/>
</dbReference>
<dbReference type="Gene3D" id="3.90.180.10">
    <property type="entry name" value="Medium-chain alcohol dehydrogenases, catalytic domain"/>
    <property type="match status" value="1"/>
</dbReference>
<dbReference type="Gene3D" id="3.40.50.720">
    <property type="entry name" value="NAD(P)-binding Rossmann-like Domain"/>
    <property type="match status" value="1"/>
</dbReference>
<dbReference type="HAMAP" id="MF_00627">
    <property type="entry name" value="Thr_dehydrog"/>
    <property type="match status" value="1"/>
</dbReference>
<dbReference type="InterPro" id="IPR013149">
    <property type="entry name" value="ADH-like_C"/>
</dbReference>
<dbReference type="InterPro" id="IPR013154">
    <property type="entry name" value="ADH-like_N"/>
</dbReference>
<dbReference type="InterPro" id="IPR002328">
    <property type="entry name" value="ADH_Zn_CS"/>
</dbReference>
<dbReference type="InterPro" id="IPR011032">
    <property type="entry name" value="GroES-like_sf"/>
</dbReference>
<dbReference type="InterPro" id="IPR004627">
    <property type="entry name" value="L-Threonine_3-DHase"/>
</dbReference>
<dbReference type="InterPro" id="IPR036291">
    <property type="entry name" value="NAD(P)-bd_dom_sf"/>
</dbReference>
<dbReference type="InterPro" id="IPR050129">
    <property type="entry name" value="Zn_alcohol_dh"/>
</dbReference>
<dbReference type="NCBIfam" id="NF003808">
    <property type="entry name" value="PRK05396.1"/>
    <property type="match status" value="1"/>
</dbReference>
<dbReference type="PANTHER" id="PTHR43401">
    <property type="entry name" value="L-THREONINE 3-DEHYDROGENASE"/>
    <property type="match status" value="1"/>
</dbReference>
<dbReference type="PANTHER" id="PTHR43401:SF2">
    <property type="entry name" value="L-THREONINE 3-DEHYDROGENASE"/>
    <property type="match status" value="1"/>
</dbReference>
<dbReference type="Pfam" id="PF08240">
    <property type="entry name" value="ADH_N"/>
    <property type="match status" value="1"/>
</dbReference>
<dbReference type="Pfam" id="PF00107">
    <property type="entry name" value="ADH_zinc_N"/>
    <property type="match status" value="1"/>
</dbReference>
<dbReference type="SUPFAM" id="SSF50129">
    <property type="entry name" value="GroES-like"/>
    <property type="match status" value="1"/>
</dbReference>
<dbReference type="SUPFAM" id="SSF51735">
    <property type="entry name" value="NAD(P)-binding Rossmann-fold domains"/>
    <property type="match status" value="1"/>
</dbReference>
<dbReference type="PROSITE" id="PS00059">
    <property type="entry name" value="ADH_ZINC"/>
    <property type="match status" value="1"/>
</dbReference>
<reference key="1">
    <citation type="journal article" date="2002" name="Nature">
        <title>Complete genome sequence of the model actinomycete Streptomyces coelicolor A3(2).</title>
        <authorList>
            <person name="Bentley S.D."/>
            <person name="Chater K.F."/>
            <person name="Cerdeno-Tarraga A.-M."/>
            <person name="Challis G.L."/>
            <person name="Thomson N.R."/>
            <person name="James K.D."/>
            <person name="Harris D.E."/>
            <person name="Quail M.A."/>
            <person name="Kieser H."/>
            <person name="Harper D."/>
            <person name="Bateman A."/>
            <person name="Brown S."/>
            <person name="Chandra G."/>
            <person name="Chen C.W."/>
            <person name="Collins M."/>
            <person name="Cronin A."/>
            <person name="Fraser A."/>
            <person name="Goble A."/>
            <person name="Hidalgo J."/>
            <person name="Hornsby T."/>
            <person name="Howarth S."/>
            <person name="Huang C.-H."/>
            <person name="Kieser T."/>
            <person name="Larke L."/>
            <person name="Murphy L.D."/>
            <person name="Oliver K."/>
            <person name="O'Neil S."/>
            <person name="Rabbinowitsch E."/>
            <person name="Rajandream M.A."/>
            <person name="Rutherford K.M."/>
            <person name="Rutter S."/>
            <person name="Seeger K."/>
            <person name="Saunders D."/>
            <person name="Sharp S."/>
            <person name="Squares R."/>
            <person name="Squares S."/>
            <person name="Taylor K."/>
            <person name="Warren T."/>
            <person name="Wietzorrek A."/>
            <person name="Woodward J.R."/>
            <person name="Barrell B.G."/>
            <person name="Parkhill J."/>
            <person name="Hopwood D.A."/>
        </authorList>
    </citation>
    <scope>NUCLEOTIDE SEQUENCE [LARGE SCALE GENOMIC DNA]</scope>
    <source>
        <strain>ATCC BAA-471 / A3(2) / M145</strain>
    </source>
</reference>
<name>TDH_STRCO</name>
<protein>
    <recommendedName>
        <fullName evidence="1">L-threonine 3-dehydrogenase</fullName>
        <shortName evidence="1">TDH</shortName>
        <ecNumber evidence="1">1.1.1.103</ecNumber>
    </recommendedName>
</protein>
<keyword id="KW-0963">Cytoplasm</keyword>
<keyword id="KW-0479">Metal-binding</keyword>
<keyword id="KW-0520">NAD</keyword>
<keyword id="KW-0560">Oxidoreductase</keyword>
<keyword id="KW-1185">Reference proteome</keyword>
<keyword id="KW-0862">Zinc</keyword>
<sequence length="342" mass="36458">MKALVKENAEPGLWLADVPEPTIGSGDVLIKVLRTGICGTDLHIRAWDGWAQQAIRTPLVVGHEFVGEVVDTGRDVTDIKAGDRVSGEGHLVCGKCRNCLAGRRHLCRATVGLGVGRDGAFAEYVALPASNVWVHRVPVDLDVAAIFDPFGNAVHTALSFPLVGEDVLITGAGPIGLMAAAVARHAGARNVVITDVSEERLELARKVGATLALNVSDATIADGQRELGLREGFDIGLEMSGRPEAMRDMIANMTHGGRIAMLGLPAEEFPVDWARVVTSMITVKGIYGREMFETWYAMSVLLEGGLDLAPVITGRYSHRDFEAAFADAASGRGGKVILDWTA</sequence>
<evidence type="ECO:0000255" key="1">
    <source>
        <dbReference type="HAMAP-Rule" id="MF_00627"/>
    </source>
</evidence>
<gene>
    <name evidence="1" type="primary">tdh</name>
    <name type="ordered locus">SCO6799</name>
    <name type="ORF">SC1A2.08</name>
</gene>
<comment type="function">
    <text evidence="1">Catalyzes the NAD(+)-dependent oxidation of L-threonine to 2-amino-3-ketobutyrate.</text>
</comment>
<comment type="catalytic activity">
    <reaction evidence="1">
        <text>L-threonine + NAD(+) = (2S)-2-amino-3-oxobutanoate + NADH + H(+)</text>
        <dbReference type="Rhea" id="RHEA:13161"/>
        <dbReference type="ChEBI" id="CHEBI:15378"/>
        <dbReference type="ChEBI" id="CHEBI:57540"/>
        <dbReference type="ChEBI" id="CHEBI:57926"/>
        <dbReference type="ChEBI" id="CHEBI:57945"/>
        <dbReference type="ChEBI" id="CHEBI:78948"/>
        <dbReference type="EC" id="1.1.1.103"/>
    </reaction>
</comment>
<comment type="cofactor">
    <cofactor evidence="1">
        <name>Zn(2+)</name>
        <dbReference type="ChEBI" id="CHEBI:29105"/>
    </cofactor>
    <text evidence="1">Binds 2 Zn(2+) ions per subunit.</text>
</comment>
<comment type="pathway">
    <text evidence="1">Amino-acid degradation; L-threonine degradation via oxydo-reductase pathway; glycine from L-threonine: step 1/2.</text>
</comment>
<comment type="subunit">
    <text evidence="1">Homotetramer.</text>
</comment>
<comment type="subcellular location">
    <subcellularLocation>
        <location evidence="1">Cytoplasm</location>
    </subcellularLocation>
</comment>
<comment type="similarity">
    <text evidence="1">Belongs to the zinc-containing alcohol dehydrogenase family.</text>
</comment>
<organism>
    <name type="scientific">Streptomyces coelicolor (strain ATCC BAA-471 / A3(2) / M145)</name>
    <dbReference type="NCBI Taxonomy" id="100226"/>
    <lineage>
        <taxon>Bacteria</taxon>
        <taxon>Bacillati</taxon>
        <taxon>Actinomycetota</taxon>
        <taxon>Actinomycetes</taxon>
        <taxon>Kitasatosporales</taxon>
        <taxon>Streptomycetaceae</taxon>
        <taxon>Streptomyces</taxon>
        <taxon>Streptomyces albidoflavus group</taxon>
    </lineage>
</organism>
<proteinExistence type="inferred from homology"/>
<feature type="chain" id="PRO_0000160860" description="L-threonine 3-dehydrogenase">
    <location>
        <begin position="1"/>
        <end position="342"/>
    </location>
</feature>
<feature type="active site" description="Charge relay system" evidence="1">
    <location>
        <position position="40"/>
    </location>
</feature>
<feature type="active site" description="Charge relay system" evidence="1">
    <location>
        <position position="43"/>
    </location>
</feature>
<feature type="binding site" evidence="1">
    <location>
        <position position="38"/>
    </location>
    <ligand>
        <name>Zn(2+)</name>
        <dbReference type="ChEBI" id="CHEBI:29105"/>
        <label>1</label>
        <note>catalytic</note>
    </ligand>
</feature>
<feature type="binding site" evidence="1">
    <location>
        <position position="63"/>
    </location>
    <ligand>
        <name>Zn(2+)</name>
        <dbReference type="ChEBI" id="CHEBI:29105"/>
        <label>1</label>
        <note>catalytic</note>
    </ligand>
</feature>
<feature type="binding site" evidence="1">
    <location>
        <position position="64"/>
    </location>
    <ligand>
        <name>Zn(2+)</name>
        <dbReference type="ChEBI" id="CHEBI:29105"/>
        <label>1</label>
        <note>catalytic</note>
    </ligand>
</feature>
<feature type="binding site" evidence="1">
    <location>
        <position position="93"/>
    </location>
    <ligand>
        <name>Zn(2+)</name>
        <dbReference type="ChEBI" id="CHEBI:29105"/>
        <label>2</label>
    </ligand>
</feature>
<feature type="binding site" evidence="1">
    <location>
        <position position="96"/>
    </location>
    <ligand>
        <name>Zn(2+)</name>
        <dbReference type="ChEBI" id="CHEBI:29105"/>
        <label>2</label>
    </ligand>
</feature>
<feature type="binding site" evidence="1">
    <location>
        <position position="99"/>
    </location>
    <ligand>
        <name>Zn(2+)</name>
        <dbReference type="ChEBI" id="CHEBI:29105"/>
        <label>2</label>
    </ligand>
</feature>
<feature type="binding site" evidence="1">
    <location>
        <position position="107"/>
    </location>
    <ligand>
        <name>Zn(2+)</name>
        <dbReference type="ChEBI" id="CHEBI:29105"/>
        <label>2</label>
    </ligand>
</feature>
<feature type="binding site" evidence="1">
    <location>
        <position position="175"/>
    </location>
    <ligand>
        <name>NAD(+)</name>
        <dbReference type="ChEBI" id="CHEBI:57540"/>
    </ligand>
</feature>
<feature type="binding site" evidence="1">
    <location>
        <position position="195"/>
    </location>
    <ligand>
        <name>NAD(+)</name>
        <dbReference type="ChEBI" id="CHEBI:57540"/>
    </ligand>
</feature>
<feature type="binding site" evidence="1">
    <location>
        <position position="200"/>
    </location>
    <ligand>
        <name>NAD(+)</name>
        <dbReference type="ChEBI" id="CHEBI:57540"/>
    </ligand>
</feature>
<feature type="binding site" evidence="1">
    <location>
        <begin position="262"/>
        <end position="264"/>
    </location>
    <ligand>
        <name>NAD(+)</name>
        <dbReference type="ChEBI" id="CHEBI:57540"/>
    </ligand>
</feature>
<feature type="binding site" evidence="1">
    <location>
        <begin position="286"/>
        <end position="287"/>
    </location>
    <ligand>
        <name>NAD(+)</name>
        <dbReference type="ChEBI" id="CHEBI:57540"/>
    </ligand>
</feature>
<feature type="site" description="Important for catalytic activity for the proton relay mechanism but does not participate directly in the coordination of zinc atom" evidence="1">
    <location>
        <position position="148"/>
    </location>
</feature>
<accession>Q9L233</accession>